<comment type="function">
    <text evidence="3 4 5">Exogenous application of myomodulins potentiates ARC muscle contraction.</text>
</comment>
<comment type="subcellular location">
    <subcellularLocation>
        <location>Secreted</location>
    </subcellularLocation>
</comment>
<comment type="tissue specificity">
    <text evidence="3 6 7">Expressed in all ganglia of the CNS, but only in a subset of neurons including L10 in the abdominal ganglion and B16 in the buccal ganglion.</text>
</comment>
<reference key="1">
    <citation type="journal article" date="1993" name="DNA Cell Biol.">
        <title>Molecular cloning of myomodulin cDNA, a neuropeptide precursor gene expressed in neuron L10 of Aplysia californica.</title>
        <authorList>
            <person name="Lopez V."/>
            <person name="Wickham L."/>
            <person name="Desgroseillers L."/>
        </authorList>
    </citation>
    <scope>NUCLEOTIDE SEQUENCE [MRNA]</scope>
    <scope>VARIANT LEU-362</scope>
    <scope>TISSUE SPECIFICITY</scope>
    <source>
        <tissue>Abdominal ganglion</tissue>
        <tissue>Cerebral ganglion</tissue>
        <tissue>CNS</tissue>
    </source>
</reference>
<reference key="2">
    <citation type="journal article" date="1993" name="J. Neurosci.">
        <title>The myomodulin-related neuropeptides: characterization of a gene encoding a family of peptide cotransmitters in Aplysia.</title>
        <authorList>
            <person name="Miller M.W."/>
            <person name="Beushausen S."/>
            <person name="Vitek A."/>
            <person name="Stamm S."/>
            <person name="Kupfermann I."/>
            <person name="Brosius J."/>
            <person name="Weiss K.R."/>
        </authorList>
    </citation>
    <scope>NUCLEOTIDE SEQUENCE [MRNA]</scope>
    <scope>TISSUE SPECIFICITY</scope>
    <source>
        <tissue>Buccal ganglion</tissue>
    </source>
</reference>
<reference key="3">
    <citation type="journal article" date="1991" name="Peptides">
        <title>Structure, bioactivity, and cellular localization of myomodulin B: a novel Aplysia peptide.</title>
        <authorList>
            <person name="Cropper E.C."/>
            <person name="Vilim F.S."/>
            <person name="Alevizos A."/>
            <person name="Tenenbaum R."/>
            <person name="Kolks M.A.G."/>
            <person name="Rosen S."/>
            <person name="Kupfermann I."/>
            <person name="Weiss K.R."/>
        </authorList>
    </citation>
    <scope>PROTEIN SEQUENCE OF 53-60</scope>
    <scope>AMIDATION AT LEU-60</scope>
    <scope>FUNCTION</scope>
    <scope>TISSUE SPECIFICITY</scope>
    <source>
        <tissue>Buccal muscle</tissue>
    </source>
</reference>
<reference key="4">
    <citation type="journal article" date="1995" name="J. Neurophysiol.">
        <title>Nine members of the myomodulin family of peptide cotransmitters at the B16-ARC neuromuscular junction of Aplysia.</title>
        <authorList>
            <person name="Brezina V."/>
            <person name="Bank B."/>
            <person name="Cropper E.C."/>
            <person name="Rosen S."/>
            <person name="Vilim F.S."/>
            <person name="Kupfermann I."/>
            <person name="Weiss K.R."/>
        </authorList>
    </citation>
    <scope>PROTEIN SEQUENCE OF 63-69; 193-199; 203-209; 240-246 AND 358-364</scope>
    <scope>AMIDATION AT LEU-69; LEU-199; LEU-209; LEU-246 AND LEU-364</scope>
    <scope>FUNCTION</scope>
    <source>
        <tissue>Buccal muscle</tissue>
    </source>
</reference>
<reference key="5">
    <citation type="journal article" date="1987" name="Proc. Natl. Acad. Sci. U.S.A.">
        <title>Myomodulin: a bioactive neuropeptide present in an identified cholinergic buccal motor neuron of Aplysia.</title>
        <authorList>
            <person name="Cropper E.C."/>
            <person name="Tenenbaum R."/>
            <person name="Kolks M.A.G."/>
            <person name="Kupfermann I."/>
            <person name="Weiss K.R."/>
        </authorList>
    </citation>
    <scope>PROTEIN SEQUENCE OF MYOMODULIN A</scope>
    <scope>AMIDATION AT LEU-256; LEU-266; LEU-276; LEU-286; LEU-296; LEU-306; LEU-316; LEU-326; LEU-336 AND LEU-346</scope>
    <scope>FUNCTION</scope>
    <source>
        <tissue>Buccal muscle</tissue>
    </source>
</reference>
<proteinExistence type="evidence at protein level"/>
<protein>
    <recommendedName>
        <fullName>Myomodulin neuropeptides 1</fullName>
    </recommendedName>
    <component>
        <recommendedName>
            <fullName>Myomodulin-A</fullName>
            <shortName>MM-A</shortName>
        </recommendedName>
        <alternativeName>
            <fullName>Neuron B16 peptide</fullName>
        </alternativeName>
        <alternativeName>
            <fullName>PMSMLRL-amide</fullName>
        </alternativeName>
    </component>
    <component>
        <recommendedName>
            <fullName>Myomodulin-B</fullName>
            <shortName>MM-B</shortName>
            <shortName>MMb</shortName>
        </recommendedName>
        <alternativeName>
            <fullName>GSYRMMRL-amide</fullName>
        </alternativeName>
    </component>
    <component>
        <recommendedName>
            <fullName>Myomodulin-D</fullName>
            <shortName>MM-D</shortName>
            <shortName>MMd</shortName>
        </recommendedName>
        <alternativeName>
            <fullName>GLSMLRL-amide</fullName>
        </alternativeName>
    </component>
    <component>
        <recommendedName>
            <fullName>Myomodulin-F</fullName>
            <shortName>MM-F</shortName>
            <shortName>MMf</shortName>
        </recommendedName>
        <alternativeName>
            <fullName>SLNMLRL-amide</fullName>
        </alternativeName>
    </component>
    <component>
        <recommendedName>
            <fullName>Myomodulin-G</fullName>
            <shortName>MM-G</shortName>
            <shortName>MMg</shortName>
        </recommendedName>
        <alternativeName>
            <fullName>TLSMLRL-amide</fullName>
        </alternativeName>
    </component>
    <component>
        <recommendedName>
            <fullName>Myomodulin-H</fullName>
            <shortName>MM-H</shortName>
            <shortName>MMh</shortName>
        </recommendedName>
        <alternativeName>
            <fullName>GLHMLRL-amide</fullName>
        </alternativeName>
    </component>
    <component>
        <recommendedName>
            <fullName>Myomodulin-I</fullName>
            <shortName>MM-I</shortName>
            <shortName>MMi</shortName>
        </recommendedName>
        <alternativeName>
            <fullName>SLSMLRL-amide</fullName>
        </alternativeName>
    </component>
</protein>
<name>MYOM1_APLCA</name>
<gene>
    <name type="primary">MYOMOD1</name>
</gene>
<dbReference type="EMBL" id="L01421">
    <property type="protein sequence ID" value="AAA27758.1"/>
    <property type="molecule type" value="mRNA"/>
</dbReference>
<dbReference type="EMBL" id="S55210">
    <property type="protein sequence ID" value="AAB25131.1"/>
    <property type="molecule type" value="mRNA"/>
</dbReference>
<dbReference type="EMBL" id="S55211">
    <property type="protein sequence ID" value="AAB25132.1"/>
    <property type="molecule type" value="mRNA"/>
</dbReference>
<dbReference type="EMBL" id="S64300">
    <property type="protein sequence ID" value="AAB27697.1"/>
    <property type="molecule type" value="mRNA"/>
</dbReference>
<dbReference type="PIR" id="A28340">
    <property type="entry name" value="A28340"/>
</dbReference>
<dbReference type="RefSeq" id="NP_001191423.1">
    <property type="nucleotide sequence ID" value="NM_001204494.1"/>
</dbReference>
<dbReference type="EnsemblMetazoa" id="NM_001204494.2">
    <property type="protein sequence ID" value="NP_001191423.1"/>
    <property type="gene ID" value="GeneID_100533334"/>
</dbReference>
<dbReference type="GeneID" id="100533334"/>
<dbReference type="CTD" id="100533334"/>
<dbReference type="OrthoDB" id="6085322at2759"/>
<dbReference type="Proteomes" id="UP000694888">
    <property type="component" value="Unplaced"/>
</dbReference>
<dbReference type="GO" id="GO:0005576">
    <property type="term" value="C:extracellular region"/>
    <property type="evidence" value="ECO:0007669"/>
    <property type="project" value="UniProtKB-SubCell"/>
</dbReference>
<dbReference type="GO" id="GO:0007218">
    <property type="term" value="P:neuropeptide signaling pathway"/>
    <property type="evidence" value="ECO:0007669"/>
    <property type="project" value="UniProtKB-KW"/>
</dbReference>
<dbReference type="InterPro" id="IPR051041">
    <property type="entry name" value="FMRFamide-related_np"/>
</dbReference>
<dbReference type="PANTHER" id="PTHR20986">
    <property type="entry name" value="FMRFAMIDE-RELATED PEPTIDES"/>
    <property type="match status" value="1"/>
</dbReference>
<dbReference type="PANTHER" id="PTHR20986:SF22">
    <property type="entry name" value="FMRFAMIDE-RELATED PEPTIDES"/>
    <property type="match status" value="1"/>
</dbReference>
<keyword id="KW-0027">Amidation</keyword>
<keyword id="KW-0165">Cleavage on pair of basic residues</keyword>
<keyword id="KW-0903">Direct protein sequencing</keyword>
<keyword id="KW-0527">Neuropeptide</keyword>
<keyword id="KW-0677">Repeat</keyword>
<keyword id="KW-0964">Secreted</keyword>
<keyword id="KW-0732">Signal</keyword>
<feature type="signal peptide" evidence="1">
    <location>
        <begin position="1"/>
        <end position="18"/>
    </location>
</feature>
<feature type="propeptide" id="PRO_0000001837" evidence="1">
    <location>
        <begin position="19"/>
        <end position="50"/>
    </location>
</feature>
<feature type="peptide" id="PRO_0000001838" description="Myomodulin-B" evidence="3">
    <location>
        <begin position="53"/>
        <end position="60"/>
    </location>
</feature>
<feature type="peptide" id="PRO_0000001839" description="Myomodulin-H" evidence="5">
    <location>
        <begin position="63"/>
        <end position="69"/>
    </location>
</feature>
<feature type="propeptide" id="PRO_0000001840" evidence="1">
    <location>
        <begin position="73"/>
        <end position="190"/>
    </location>
</feature>
<feature type="peptide" id="PRO_0000001841" description="Myomodulin-I" evidence="5">
    <location>
        <begin position="193"/>
        <end position="199"/>
    </location>
</feature>
<feature type="peptide" id="PRO_0000001842" description="Myomodulin-D" evidence="5">
    <location>
        <begin position="203"/>
        <end position="209"/>
    </location>
</feature>
<feature type="propeptide" id="PRO_0000001843" evidence="1">
    <location>
        <begin position="213"/>
        <end position="237"/>
    </location>
</feature>
<feature type="peptide" id="PRO_0000001844" description="Myomodulin-G" evidence="5">
    <location>
        <begin position="240"/>
        <end position="246"/>
    </location>
</feature>
<feature type="peptide" id="PRO_0000001845" description="Myomodulin-A" evidence="4">
    <location>
        <begin position="250"/>
        <end position="256"/>
    </location>
</feature>
<feature type="peptide" id="PRO_0000001846" description="Myomodulin-A" evidence="4">
    <location>
        <begin position="260"/>
        <end position="266"/>
    </location>
</feature>
<feature type="peptide" id="PRO_0000001847" description="Myomodulin-A" evidence="4">
    <location>
        <begin position="270"/>
        <end position="276"/>
    </location>
</feature>
<feature type="peptide" id="PRO_0000001848" description="Myomodulin-A" evidence="4">
    <location>
        <begin position="280"/>
        <end position="286"/>
    </location>
</feature>
<feature type="peptide" id="PRO_0000001849" description="Myomodulin-A" evidence="4">
    <location>
        <begin position="290"/>
        <end position="296"/>
    </location>
</feature>
<feature type="peptide" id="PRO_0000001850" description="Myomodulin-A" evidence="4">
    <location>
        <begin position="300"/>
        <end position="306"/>
    </location>
</feature>
<feature type="peptide" id="PRO_0000001851" description="Myomodulin-A" evidence="4">
    <location>
        <begin position="310"/>
        <end position="316"/>
    </location>
</feature>
<feature type="peptide" id="PRO_0000001852" description="Myomodulin-A" evidence="4">
    <location>
        <begin position="320"/>
        <end position="326"/>
    </location>
</feature>
<feature type="peptide" id="PRO_0000001853" description="Myomodulin-A" evidence="4">
    <location>
        <begin position="330"/>
        <end position="336"/>
    </location>
</feature>
<feature type="peptide" id="PRO_0000001854" description="Myomodulin-A" evidence="4">
    <location>
        <begin position="340"/>
        <end position="346"/>
    </location>
</feature>
<feature type="propeptide" id="PRO_0000001855" evidence="1">
    <location>
        <begin position="350"/>
        <end position="355"/>
    </location>
</feature>
<feature type="peptide" id="PRO_0000001856" description="Myomodulin-F" evidence="5">
    <location>
        <begin position="358"/>
        <end position="364"/>
    </location>
</feature>
<feature type="propeptide" id="PRO_0000001857" evidence="1">
    <location>
        <begin position="368"/>
        <end position="370"/>
    </location>
</feature>
<feature type="region of interest" description="Disordered" evidence="2">
    <location>
        <begin position="28"/>
        <end position="52"/>
    </location>
</feature>
<feature type="region of interest" description="Disordered" evidence="2">
    <location>
        <begin position="210"/>
        <end position="230"/>
    </location>
</feature>
<feature type="region of interest" description="Disordered" evidence="2">
    <location>
        <begin position="344"/>
        <end position="370"/>
    </location>
</feature>
<feature type="compositionally biased region" description="Low complexity" evidence="2">
    <location>
        <begin position="28"/>
        <end position="40"/>
    </location>
</feature>
<feature type="compositionally biased region" description="Basic and acidic residues" evidence="2">
    <location>
        <begin position="210"/>
        <end position="226"/>
    </location>
</feature>
<feature type="compositionally biased region" description="Basic and acidic residues" evidence="2">
    <location>
        <begin position="347"/>
        <end position="358"/>
    </location>
</feature>
<feature type="modified residue" description="Leucine amide">
    <location>
        <position position="60"/>
    </location>
</feature>
<feature type="modified residue" description="Leucine amide" evidence="5">
    <location>
        <position position="69"/>
    </location>
</feature>
<feature type="modified residue" description="Leucine amide" evidence="5">
    <location>
        <position position="199"/>
    </location>
</feature>
<feature type="modified residue" description="Leucine amide" evidence="5">
    <location>
        <position position="209"/>
    </location>
</feature>
<feature type="modified residue" description="Leucine amide" evidence="5">
    <location>
        <position position="246"/>
    </location>
</feature>
<feature type="modified residue" description="Leucine amide" evidence="4">
    <location>
        <position position="256"/>
    </location>
</feature>
<feature type="modified residue" description="Leucine amide" evidence="4">
    <location>
        <position position="266"/>
    </location>
</feature>
<feature type="modified residue" description="Leucine amide" evidence="4">
    <location>
        <position position="276"/>
    </location>
</feature>
<feature type="modified residue" description="Leucine amide" evidence="4">
    <location>
        <position position="286"/>
    </location>
</feature>
<feature type="modified residue" description="Leucine amide" evidence="4">
    <location>
        <position position="296"/>
    </location>
</feature>
<feature type="modified residue" description="Leucine amide" evidence="4">
    <location>
        <position position="306"/>
    </location>
</feature>
<feature type="modified residue" description="Leucine amide" evidence="4">
    <location>
        <position position="316"/>
    </location>
</feature>
<feature type="modified residue" description="Leucine amide" evidence="4">
    <location>
        <position position="326"/>
    </location>
</feature>
<feature type="modified residue" description="Leucine amide" evidence="4">
    <location>
        <position position="336"/>
    </location>
</feature>
<feature type="modified residue" description="Leucine amide" evidence="4">
    <location>
        <position position="346"/>
    </location>
</feature>
<feature type="modified residue" description="Leucine amide" evidence="5">
    <location>
        <position position="364"/>
    </location>
</feature>
<feature type="sequence variant" evidence="7">
    <original>S</original>
    <variation>L</variation>
    <location>
        <position position="362"/>
    </location>
</feature>
<feature type="sequence conflict" description="In Ref. 2; AAB27697." evidence="8" ref="2">
    <original>D</original>
    <variation>A</variation>
    <location>
        <position position="231"/>
    </location>
</feature>
<sequence>MQVYMLLPLAVFASLTYQGACEETAAAQTSSDASTSSASSEHAENELSRAKRGSYRMMRLGRGLHMLRLGKRGGPVEPESEENLETLLNLLQGYYSDVPEYPSEFDDTDLAYPYEEYDAPAHPRYRRSTPPTDGVVAPDVLQKGSSEFEDFGDSQLDESDEGYYGYDPENYLYGDFEDYLEPEEGGLGEEKRSLSMLRLGKRGLSMLRLGKREGEEGDEMDKKQDESLNDDFENDDIKRTLSMLRLGKRPMSMLRLGKRPMSMLRLGKRPMSMLRLGKRPMSMLRLGKRPMSMLRLGKRPMSMLRLGKRPMSMLRLGKRPMSMLRLGKRPMSMLRLGKRPMSMLRLGKRDDDEKEKKSLNMSRLGKRSTQ</sequence>
<accession>P15513</accession>
<accession>Q07974</accession>
<accession>Q27916</accession>
<evidence type="ECO:0000255" key="1"/>
<evidence type="ECO:0000256" key="2">
    <source>
        <dbReference type="SAM" id="MobiDB-lite"/>
    </source>
</evidence>
<evidence type="ECO:0000269" key="3">
    <source>
    </source>
</evidence>
<evidence type="ECO:0000269" key="4">
    <source>
    </source>
</evidence>
<evidence type="ECO:0000269" key="5">
    <source>
    </source>
</evidence>
<evidence type="ECO:0000269" key="6">
    <source>
    </source>
</evidence>
<evidence type="ECO:0000269" key="7">
    <source>
    </source>
</evidence>
<evidence type="ECO:0000305" key="8"/>
<organism>
    <name type="scientific">Aplysia californica</name>
    <name type="common">California sea hare</name>
    <dbReference type="NCBI Taxonomy" id="6500"/>
    <lineage>
        <taxon>Eukaryota</taxon>
        <taxon>Metazoa</taxon>
        <taxon>Spiralia</taxon>
        <taxon>Lophotrochozoa</taxon>
        <taxon>Mollusca</taxon>
        <taxon>Gastropoda</taxon>
        <taxon>Heterobranchia</taxon>
        <taxon>Euthyneura</taxon>
        <taxon>Tectipleura</taxon>
        <taxon>Aplysiida</taxon>
        <taxon>Aplysioidea</taxon>
        <taxon>Aplysiidae</taxon>
        <taxon>Aplysia</taxon>
    </lineage>
</organism>